<comment type="function">
    <text evidence="1">Part of the high-affinity ATP-driven potassium transport (or Kdp) system, which catalyzes the hydrolysis of ATP coupled with the electrogenic transport of potassium into the cytoplasm. This subunit acts as a catalytic chaperone that increases the ATP-binding affinity of the ATP-hydrolyzing subunit KdpB by the formation of a transient KdpB/KdpC/ATP ternary complex.</text>
</comment>
<comment type="subunit">
    <text evidence="1">The system is composed of three essential subunits: KdpA, KdpB and KdpC.</text>
</comment>
<comment type="subcellular location">
    <subcellularLocation>
        <location evidence="1">Cell inner membrane</location>
        <topology evidence="1">Single-pass membrane protein</topology>
    </subcellularLocation>
</comment>
<comment type="similarity">
    <text evidence="1">Belongs to the KdpC family.</text>
</comment>
<organism>
    <name type="scientific">Erwinia tasmaniensis (strain DSM 17950 / CFBP 7177 / CIP 109463 / NCPPB 4357 / Et1/99)</name>
    <dbReference type="NCBI Taxonomy" id="465817"/>
    <lineage>
        <taxon>Bacteria</taxon>
        <taxon>Pseudomonadati</taxon>
        <taxon>Pseudomonadota</taxon>
        <taxon>Gammaproteobacteria</taxon>
        <taxon>Enterobacterales</taxon>
        <taxon>Erwiniaceae</taxon>
        <taxon>Erwinia</taxon>
    </lineage>
</organism>
<dbReference type="EMBL" id="CU468135">
    <property type="protein sequence ID" value="CAO98409.1"/>
    <property type="molecule type" value="Genomic_DNA"/>
</dbReference>
<dbReference type="RefSeq" id="WP_012443032.1">
    <property type="nucleotide sequence ID" value="NC_010694.1"/>
</dbReference>
<dbReference type="SMR" id="B2VJK2"/>
<dbReference type="STRING" id="465817.ETA_33630"/>
<dbReference type="KEGG" id="eta:ETA_33630"/>
<dbReference type="eggNOG" id="COG2156">
    <property type="taxonomic scope" value="Bacteria"/>
</dbReference>
<dbReference type="HOGENOM" id="CLU_077094_2_0_6"/>
<dbReference type="OrthoDB" id="9788285at2"/>
<dbReference type="Proteomes" id="UP000001726">
    <property type="component" value="Chromosome"/>
</dbReference>
<dbReference type="GO" id="GO:0005886">
    <property type="term" value="C:plasma membrane"/>
    <property type="evidence" value="ECO:0007669"/>
    <property type="project" value="UniProtKB-SubCell"/>
</dbReference>
<dbReference type="GO" id="GO:0005524">
    <property type="term" value="F:ATP binding"/>
    <property type="evidence" value="ECO:0007669"/>
    <property type="project" value="UniProtKB-UniRule"/>
</dbReference>
<dbReference type="GO" id="GO:0008556">
    <property type="term" value="F:P-type potassium transmembrane transporter activity"/>
    <property type="evidence" value="ECO:0007669"/>
    <property type="project" value="InterPro"/>
</dbReference>
<dbReference type="HAMAP" id="MF_00276">
    <property type="entry name" value="KdpC"/>
    <property type="match status" value="1"/>
</dbReference>
<dbReference type="InterPro" id="IPR003820">
    <property type="entry name" value="KdpC"/>
</dbReference>
<dbReference type="NCBIfam" id="TIGR00681">
    <property type="entry name" value="kdpC"/>
    <property type="match status" value="1"/>
</dbReference>
<dbReference type="NCBIfam" id="NF001454">
    <property type="entry name" value="PRK00315.1"/>
    <property type="match status" value="1"/>
</dbReference>
<dbReference type="PANTHER" id="PTHR30042">
    <property type="entry name" value="POTASSIUM-TRANSPORTING ATPASE C CHAIN"/>
    <property type="match status" value="1"/>
</dbReference>
<dbReference type="PANTHER" id="PTHR30042:SF2">
    <property type="entry name" value="POTASSIUM-TRANSPORTING ATPASE KDPC SUBUNIT"/>
    <property type="match status" value="1"/>
</dbReference>
<dbReference type="Pfam" id="PF02669">
    <property type="entry name" value="KdpC"/>
    <property type="match status" value="1"/>
</dbReference>
<dbReference type="PIRSF" id="PIRSF001296">
    <property type="entry name" value="K_ATPase_KdpC"/>
    <property type="match status" value="1"/>
</dbReference>
<protein>
    <recommendedName>
        <fullName evidence="1">Potassium-transporting ATPase KdpC subunit</fullName>
    </recommendedName>
    <alternativeName>
        <fullName evidence="1">ATP phosphohydrolase [potassium-transporting] C chain</fullName>
    </alternativeName>
    <alternativeName>
        <fullName evidence="1">Potassium-binding and translocating subunit C</fullName>
    </alternativeName>
    <alternativeName>
        <fullName evidence="1">Potassium-translocating ATPase C chain</fullName>
    </alternativeName>
</protein>
<keyword id="KW-0067">ATP-binding</keyword>
<keyword id="KW-0997">Cell inner membrane</keyword>
<keyword id="KW-1003">Cell membrane</keyword>
<keyword id="KW-0406">Ion transport</keyword>
<keyword id="KW-0472">Membrane</keyword>
<keyword id="KW-0547">Nucleotide-binding</keyword>
<keyword id="KW-0630">Potassium</keyword>
<keyword id="KW-0633">Potassium transport</keyword>
<keyword id="KW-1185">Reference proteome</keyword>
<keyword id="KW-0812">Transmembrane</keyword>
<keyword id="KW-1133">Transmembrane helix</keyword>
<keyword id="KW-0813">Transport</keyword>
<reference key="1">
    <citation type="journal article" date="2008" name="Environ. Microbiol.">
        <title>The genome of Erwinia tasmaniensis strain Et1/99, a non-pathogenic bacterium in the genus Erwinia.</title>
        <authorList>
            <person name="Kube M."/>
            <person name="Migdoll A.M."/>
            <person name="Mueller I."/>
            <person name="Kuhl H."/>
            <person name="Beck A."/>
            <person name="Reinhardt R."/>
            <person name="Geider K."/>
        </authorList>
    </citation>
    <scope>NUCLEOTIDE SEQUENCE [LARGE SCALE GENOMIC DNA]</scope>
    <source>
        <strain>DSM 17950 / CFBP 7177 / CIP 109463 / NCPPB 4357 / Et1/99</strain>
    </source>
</reference>
<accession>B2VJK2</accession>
<name>KDPC_ERWT9</name>
<evidence type="ECO:0000255" key="1">
    <source>
        <dbReference type="HAMAP-Rule" id="MF_00276"/>
    </source>
</evidence>
<evidence type="ECO:0000256" key="2">
    <source>
        <dbReference type="SAM" id="MobiDB-lite"/>
    </source>
</evidence>
<proteinExistence type="inferred from homology"/>
<gene>
    <name evidence="1" type="primary">kdpC</name>
    <name type="ordered locus">ETA_33630</name>
</gene>
<sequence length="190" mass="20231">MSQLRPAVFLVLLLTLITGLLYPLLTTTLAQWMFPQQANGSLLLEQGSVRGSAPIGQSFSRADYFQGRPSATSDRPYNPLASSGSNLAGSNPALDQAVSQRVAALRAANPQAGQQVPVDLVTASASGLDPQISPQAAYWQADRIAAARRLPREVVKRLIDENTTTPMPAFLGEPAVNVLALNLALDALQR</sequence>
<feature type="chain" id="PRO_1000114724" description="Potassium-transporting ATPase KdpC subunit">
    <location>
        <begin position="1"/>
        <end position="190"/>
    </location>
</feature>
<feature type="transmembrane region" description="Helical" evidence="1">
    <location>
        <begin position="6"/>
        <end position="26"/>
    </location>
</feature>
<feature type="region of interest" description="Disordered" evidence="2">
    <location>
        <begin position="67"/>
        <end position="88"/>
    </location>
</feature>
<feature type="compositionally biased region" description="Polar residues" evidence="2">
    <location>
        <begin position="69"/>
        <end position="88"/>
    </location>
</feature>